<accession>P9WIR9</accession>
<accession>L0T875</accession>
<accession>P65637</accession>
<accession>P71556</accession>
<keyword id="KW-0007">Acetylation</keyword>
<keyword id="KW-1003">Cell membrane</keyword>
<keyword id="KW-0472">Membrane</keyword>
<keyword id="KW-1185">Reference proteome</keyword>
<keyword id="KW-0812">Transmembrane</keyword>
<keyword id="KW-1133">Transmembrane helix</keyword>
<reference key="1">
    <citation type="journal article" date="1998" name="Nature">
        <title>Deciphering the biology of Mycobacterium tuberculosis from the complete genome sequence.</title>
        <authorList>
            <person name="Cole S.T."/>
            <person name="Brosch R."/>
            <person name="Parkhill J."/>
            <person name="Garnier T."/>
            <person name="Churcher C.M."/>
            <person name="Harris D.E."/>
            <person name="Gordon S.V."/>
            <person name="Eiglmeier K."/>
            <person name="Gas S."/>
            <person name="Barry C.E. III"/>
            <person name="Tekaia F."/>
            <person name="Badcock K."/>
            <person name="Basham D."/>
            <person name="Brown D."/>
            <person name="Chillingworth T."/>
            <person name="Connor R."/>
            <person name="Davies R.M."/>
            <person name="Devlin K."/>
            <person name="Feltwell T."/>
            <person name="Gentles S."/>
            <person name="Hamlin N."/>
            <person name="Holroyd S."/>
            <person name="Hornsby T."/>
            <person name="Jagels K."/>
            <person name="Krogh A."/>
            <person name="McLean J."/>
            <person name="Moule S."/>
            <person name="Murphy L.D."/>
            <person name="Oliver S."/>
            <person name="Osborne J."/>
            <person name="Quail M.A."/>
            <person name="Rajandream M.A."/>
            <person name="Rogers J."/>
            <person name="Rutter S."/>
            <person name="Seeger K."/>
            <person name="Skelton S."/>
            <person name="Squares S."/>
            <person name="Squares R."/>
            <person name="Sulston J.E."/>
            <person name="Taylor K."/>
            <person name="Whitehead S."/>
            <person name="Barrell B.G."/>
        </authorList>
    </citation>
    <scope>NUCLEOTIDE SEQUENCE [LARGE SCALE GENOMIC DNA]</scope>
    <source>
        <strain>ATCC 25618 / H37Rv</strain>
    </source>
</reference>
<reference key="2">
    <citation type="journal article" date="2011" name="Mol. Cell. Proteomics">
        <title>Proteogenomic analysis of Mycobacterium tuberculosis by high resolution mass spectrometry.</title>
        <authorList>
            <person name="Kelkar D.S."/>
            <person name="Kumar D."/>
            <person name="Kumar P."/>
            <person name="Balakrishnan L."/>
            <person name="Muthusamy B."/>
            <person name="Yadav A.K."/>
            <person name="Shrivastava P."/>
            <person name="Marimuthu A."/>
            <person name="Anand S."/>
            <person name="Sundaram H."/>
            <person name="Kingsbury R."/>
            <person name="Harsha H.C."/>
            <person name="Nair B."/>
            <person name="Prasad T.S."/>
            <person name="Chauhan D.S."/>
            <person name="Katoch K."/>
            <person name="Katoch V.M."/>
            <person name="Kumar P."/>
            <person name="Chaerkady R."/>
            <person name="Ramachandran S."/>
            <person name="Dash D."/>
            <person name="Pandey A."/>
        </authorList>
    </citation>
    <scope>ACETYLATION [LARGE SCALE ANALYSIS] AT THR-2</scope>
    <scope>CLEAVAGE OF INITIATOR METHIONINE [LARGE SCALE ANALYSIS]</scope>
    <scope>IDENTIFICATION BY MASS SPECTROMETRY [LARGE SCALE ANALYSIS]</scope>
    <source>
        <strain>ATCC 25618 / H37Rv</strain>
    </source>
</reference>
<organism>
    <name type="scientific">Mycobacterium tuberculosis (strain ATCC 25618 / H37Rv)</name>
    <dbReference type="NCBI Taxonomy" id="83332"/>
    <lineage>
        <taxon>Bacteria</taxon>
        <taxon>Bacillati</taxon>
        <taxon>Actinomycetota</taxon>
        <taxon>Actinomycetes</taxon>
        <taxon>Mycobacteriales</taxon>
        <taxon>Mycobacteriaceae</taxon>
        <taxon>Mycobacterium</taxon>
        <taxon>Mycobacterium tuberculosis complex</taxon>
    </lineage>
</organism>
<feature type="initiator methionine" description="Removed" evidence="4">
    <location>
        <position position="1"/>
    </location>
</feature>
<feature type="chain" id="PRO_0000064364" description="34 kDa antigenic protein homolog">
    <location>
        <begin position="2"/>
        <end position="303"/>
    </location>
</feature>
<feature type="transmembrane region" description="Helical" evidence="1">
    <location>
        <begin position="42"/>
        <end position="62"/>
    </location>
</feature>
<feature type="transmembrane region" description="Helical" evidence="1">
    <location>
        <begin position="77"/>
        <end position="97"/>
    </location>
</feature>
<feature type="transmembrane region" description="Helical" evidence="1">
    <location>
        <begin position="102"/>
        <end position="122"/>
    </location>
</feature>
<feature type="transmembrane region" description="Helical" evidence="1">
    <location>
        <begin position="134"/>
        <end position="154"/>
    </location>
</feature>
<feature type="region of interest" description="Disordered" evidence="2">
    <location>
        <begin position="194"/>
        <end position="303"/>
    </location>
</feature>
<feature type="compositionally biased region" description="Low complexity" evidence="2">
    <location>
        <begin position="194"/>
        <end position="207"/>
    </location>
</feature>
<feature type="compositionally biased region" description="Low complexity" evidence="2">
    <location>
        <begin position="215"/>
        <end position="255"/>
    </location>
</feature>
<feature type="compositionally biased region" description="Pro residues" evidence="2">
    <location>
        <begin position="256"/>
        <end position="271"/>
    </location>
</feature>
<feature type="compositionally biased region" description="Polar residues" evidence="2">
    <location>
        <begin position="274"/>
        <end position="286"/>
    </location>
</feature>
<feature type="compositionally biased region" description="Low complexity" evidence="2">
    <location>
        <begin position="287"/>
        <end position="303"/>
    </location>
</feature>
<feature type="modified residue" description="N-acetylthreonine" evidence="4">
    <location>
        <position position="2"/>
    </location>
</feature>
<proteinExistence type="evidence at protein level"/>
<gene>
    <name type="ordered locus">Rv0954</name>
    <name type="ORF">MTCY10D7.20c</name>
</gene>
<sequence length="303" mass="30204">MTYSPGNPGYPQAQPAGSYGGVTPSFAHADEGASKLPMYLNIAVAVLGLAAYFASFGPMFTLSTELGGGDGAVSGDTGLPVGVALLAALLAGVALVPKAKSHVTVVAVLGVLGVFLMVSATFNKPSAYSTGWALWVVLAFIVFQAVAAVLALLVETGAITAPAPRPKFDPYGQYGRYGQYGQYGVQPGGYYGQQGAQQAAGLQSPGPQQSPQPPGYGSQYGGYSSSPSQSGSGYTAQPPAQPPAQSGSQQSHQGPSTPPTGFPSFSPPPPVSAGTGSQAGSAPVNYSNPSGGEQSSSPGGAPV</sequence>
<comment type="subcellular location">
    <subcellularLocation>
        <location evidence="3">Cell membrane</location>
        <topology evidence="3">Multi-pass membrane protein</topology>
    </subcellularLocation>
</comment>
<comment type="similarity">
    <text evidence="3">To M.paratuberculosis 34 kDa antigenic protein.</text>
</comment>
<dbReference type="EMBL" id="AL123456">
    <property type="protein sequence ID" value="CCP43702.1"/>
    <property type="molecule type" value="Genomic_DNA"/>
</dbReference>
<dbReference type="PIR" id="H70716">
    <property type="entry name" value="H70716"/>
</dbReference>
<dbReference type="RefSeq" id="NP_215469.1">
    <property type="nucleotide sequence ID" value="NC_000962.3"/>
</dbReference>
<dbReference type="RefSeq" id="WP_003404875.1">
    <property type="nucleotide sequence ID" value="NZ_NVQJ01000001.1"/>
</dbReference>
<dbReference type="STRING" id="83332.Rv0954"/>
<dbReference type="TCDB" id="9.B.179.1.5">
    <property type="family name" value="the mscs/duf475 (duf475) family"/>
</dbReference>
<dbReference type="iPTMnet" id="P9WIR9"/>
<dbReference type="PaxDb" id="83332-Rv0954"/>
<dbReference type="DNASU" id="885411"/>
<dbReference type="GeneID" id="885411"/>
<dbReference type="KEGG" id="mtu:Rv0954"/>
<dbReference type="KEGG" id="mtv:RVBD_0954"/>
<dbReference type="TubercuList" id="Rv0954"/>
<dbReference type="eggNOG" id="ENOG5033AAF">
    <property type="taxonomic scope" value="Bacteria"/>
</dbReference>
<dbReference type="InParanoid" id="P9WIR9"/>
<dbReference type="OrthoDB" id="4763530at2"/>
<dbReference type="Proteomes" id="UP000001584">
    <property type="component" value="Chromosome"/>
</dbReference>
<dbReference type="GO" id="GO:0009274">
    <property type="term" value="C:peptidoglycan-based cell wall"/>
    <property type="evidence" value="ECO:0007005"/>
    <property type="project" value="MTBBASE"/>
</dbReference>
<dbReference type="GO" id="GO:0005886">
    <property type="term" value="C:plasma membrane"/>
    <property type="evidence" value="ECO:0007005"/>
    <property type="project" value="MTBBASE"/>
</dbReference>
<dbReference type="InterPro" id="IPR035166">
    <property type="entry name" value="DUF5336"/>
</dbReference>
<dbReference type="Pfam" id="PF17270">
    <property type="entry name" value="DUF5336"/>
    <property type="match status" value="1"/>
</dbReference>
<name>34KD_MYCTU</name>
<protein>
    <recommendedName>
        <fullName>34 kDa antigenic protein homolog</fullName>
    </recommendedName>
</protein>
<evidence type="ECO:0000255" key="1"/>
<evidence type="ECO:0000256" key="2">
    <source>
        <dbReference type="SAM" id="MobiDB-lite"/>
    </source>
</evidence>
<evidence type="ECO:0000305" key="3"/>
<evidence type="ECO:0007744" key="4">
    <source>
    </source>
</evidence>